<dbReference type="EMBL" id="AC005287">
    <property type="protein sequence ID" value="AAD25626.1"/>
    <property type="status" value="ALT_SEQ"/>
    <property type="molecule type" value="Genomic_DNA"/>
</dbReference>
<dbReference type="EMBL" id="CP002684">
    <property type="protein sequence ID" value="AEE33107.1"/>
    <property type="status" value="ALT_SEQ"/>
    <property type="molecule type" value="Genomic_DNA"/>
</dbReference>
<dbReference type="EMBL" id="CP002684">
    <property type="protein sequence ID" value="ANM58320.1"/>
    <property type="status" value="ALT_SEQ"/>
    <property type="molecule type" value="Genomic_DNA"/>
</dbReference>
<dbReference type="PIR" id="F96586">
    <property type="entry name" value="F96586"/>
</dbReference>
<dbReference type="RefSeq" id="NP_001320765.1">
    <property type="nucleotide sequence ID" value="NM_001333651.1"/>
</dbReference>
<dbReference type="SMR" id="Q9SLI6"/>
<dbReference type="STRING" id="3702.Q9SLI6"/>
<dbReference type="GlyCosmos" id="Q9SLI6">
    <property type="glycosylation" value="17 sites, No reported glycans"/>
</dbReference>
<dbReference type="GlyGen" id="Q9SLI6">
    <property type="glycosylation" value="17 sites"/>
</dbReference>
<dbReference type="PaxDb" id="3702-AT1G54470.2"/>
<dbReference type="PeptideAtlas" id="Q9SLI6"/>
<dbReference type="KEGG" id="ath:AT1G54470"/>
<dbReference type="KEGG" id="ath:AT1G54475"/>
<dbReference type="Araport" id="AT1G54470"/>
<dbReference type="TAIR" id="AT1G54470"/>
<dbReference type="eggNOG" id="KOG0619">
    <property type="taxonomic scope" value="Eukaryota"/>
</dbReference>
<dbReference type="InParanoid" id="Q9SLI6"/>
<dbReference type="OrthoDB" id="1108044at2759"/>
<dbReference type="Proteomes" id="UP000006548">
    <property type="component" value="Chromosome 1"/>
</dbReference>
<dbReference type="ExpressionAtlas" id="Q9SLI6">
    <property type="expression patterns" value="baseline and differential"/>
</dbReference>
<dbReference type="GO" id="GO:0005886">
    <property type="term" value="C:plasma membrane"/>
    <property type="evidence" value="ECO:0007669"/>
    <property type="project" value="UniProtKB-SubCell"/>
</dbReference>
<dbReference type="FunFam" id="3.80.10.10:FF:000213">
    <property type="entry name" value="Tyrosine-sulfated glycopeptide receptor 1"/>
    <property type="match status" value="1"/>
</dbReference>
<dbReference type="Gene3D" id="3.80.10.10">
    <property type="entry name" value="Ribonuclease Inhibitor"/>
    <property type="match status" value="4"/>
</dbReference>
<dbReference type="InterPro" id="IPR001611">
    <property type="entry name" value="Leu-rich_rpt"/>
</dbReference>
<dbReference type="InterPro" id="IPR003591">
    <property type="entry name" value="Leu-rich_rpt_typical-subtyp"/>
</dbReference>
<dbReference type="InterPro" id="IPR032675">
    <property type="entry name" value="LRR_dom_sf"/>
</dbReference>
<dbReference type="InterPro" id="IPR013210">
    <property type="entry name" value="LRR_N_plant-typ"/>
</dbReference>
<dbReference type="InterPro" id="IPR051502">
    <property type="entry name" value="RLP_Defense_Trigger"/>
</dbReference>
<dbReference type="PANTHER" id="PTHR48062">
    <property type="entry name" value="RECEPTOR-LIKE PROTEIN 14"/>
    <property type="match status" value="1"/>
</dbReference>
<dbReference type="PANTHER" id="PTHR48062:SF52">
    <property type="entry name" value="RECEPTOR-LIKE PROTEIN 8-RELATED"/>
    <property type="match status" value="1"/>
</dbReference>
<dbReference type="Pfam" id="PF00560">
    <property type="entry name" value="LRR_1"/>
    <property type="match status" value="6"/>
</dbReference>
<dbReference type="Pfam" id="PF13855">
    <property type="entry name" value="LRR_8"/>
    <property type="match status" value="1"/>
</dbReference>
<dbReference type="Pfam" id="PF08263">
    <property type="entry name" value="LRRNT_2"/>
    <property type="match status" value="1"/>
</dbReference>
<dbReference type="PRINTS" id="PR00019">
    <property type="entry name" value="LEURICHRPT"/>
</dbReference>
<dbReference type="SMART" id="SM00365">
    <property type="entry name" value="LRR_SD22"/>
    <property type="match status" value="7"/>
</dbReference>
<dbReference type="SMART" id="SM00369">
    <property type="entry name" value="LRR_TYP"/>
    <property type="match status" value="8"/>
</dbReference>
<dbReference type="SUPFAM" id="SSF52058">
    <property type="entry name" value="L domain-like"/>
    <property type="match status" value="3"/>
</dbReference>
<dbReference type="PROSITE" id="PS51450">
    <property type="entry name" value="LRR"/>
    <property type="match status" value="16"/>
</dbReference>
<evidence type="ECO:0000255" key="1"/>
<evidence type="ECO:0000255" key="2">
    <source>
        <dbReference type="PROSITE-ProRule" id="PRU00498"/>
    </source>
</evidence>
<evidence type="ECO:0000256" key="3">
    <source>
        <dbReference type="SAM" id="MobiDB-lite"/>
    </source>
</evidence>
<evidence type="ECO:0000305" key="4"/>
<evidence type="ECO:0000312" key="5">
    <source>
        <dbReference type="Araport" id="AT1G54470"/>
    </source>
</evidence>
<evidence type="ECO:0000312" key="6">
    <source>
        <dbReference type="EMBL" id="AAD25626.1"/>
    </source>
</evidence>
<organism>
    <name type="scientific">Arabidopsis thaliana</name>
    <name type="common">Mouse-ear cress</name>
    <dbReference type="NCBI Taxonomy" id="3702"/>
    <lineage>
        <taxon>Eukaryota</taxon>
        <taxon>Viridiplantae</taxon>
        <taxon>Streptophyta</taxon>
        <taxon>Embryophyta</taxon>
        <taxon>Tracheophyta</taxon>
        <taxon>Spermatophyta</taxon>
        <taxon>Magnoliopsida</taxon>
        <taxon>eudicotyledons</taxon>
        <taxon>Gunneridae</taxon>
        <taxon>Pentapetalae</taxon>
        <taxon>rosids</taxon>
        <taxon>malvids</taxon>
        <taxon>Brassicales</taxon>
        <taxon>Brassicaceae</taxon>
        <taxon>Camelineae</taxon>
        <taxon>Arabidopsis</taxon>
    </lineage>
</organism>
<reference key="1">
    <citation type="journal article" date="2000" name="Nature">
        <title>Sequence and analysis of chromosome 1 of the plant Arabidopsis thaliana.</title>
        <authorList>
            <person name="Theologis A."/>
            <person name="Ecker J.R."/>
            <person name="Palm C.J."/>
            <person name="Federspiel N.A."/>
            <person name="Kaul S."/>
            <person name="White O."/>
            <person name="Alonso J."/>
            <person name="Altafi H."/>
            <person name="Araujo R."/>
            <person name="Bowman C.L."/>
            <person name="Brooks S.Y."/>
            <person name="Buehler E."/>
            <person name="Chan A."/>
            <person name="Chao Q."/>
            <person name="Chen H."/>
            <person name="Cheuk R.F."/>
            <person name="Chin C.W."/>
            <person name="Chung M.K."/>
            <person name="Conn L."/>
            <person name="Conway A.B."/>
            <person name="Conway A.R."/>
            <person name="Creasy T.H."/>
            <person name="Dewar K."/>
            <person name="Dunn P."/>
            <person name="Etgu P."/>
            <person name="Feldblyum T.V."/>
            <person name="Feng J.-D."/>
            <person name="Fong B."/>
            <person name="Fujii C.Y."/>
            <person name="Gill J.E."/>
            <person name="Goldsmith A.D."/>
            <person name="Haas B."/>
            <person name="Hansen N.F."/>
            <person name="Hughes B."/>
            <person name="Huizar L."/>
            <person name="Hunter J.L."/>
            <person name="Jenkins J."/>
            <person name="Johnson-Hopson C."/>
            <person name="Khan S."/>
            <person name="Khaykin E."/>
            <person name="Kim C.J."/>
            <person name="Koo H.L."/>
            <person name="Kremenetskaia I."/>
            <person name="Kurtz D.B."/>
            <person name="Kwan A."/>
            <person name="Lam B."/>
            <person name="Langin-Hooper S."/>
            <person name="Lee A."/>
            <person name="Lee J.M."/>
            <person name="Lenz C.A."/>
            <person name="Li J.H."/>
            <person name="Li Y.-P."/>
            <person name="Lin X."/>
            <person name="Liu S.X."/>
            <person name="Liu Z.A."/>
            <person name="Luros J.S."/>
            <person name="Maiti R."/>
            <person name="Marziali A."/>
            <person name="Militscher J."/>
            <person name="Miranda M."/>
            <person name="Nguyen M."/>
            <person name="Nierman W.C."/>
            <person name="Osborne B.I."/>
            <person name="Pai G."/>
            <person name="Peterson J."/>
            <person name="Pham P.K."/>
            <person name="Rizzo M."/>
            <person name="Rooney T."/>
            <person name="Rowley D."/>
            <person name="Sakano H."/>
            <person name="Salzberg S.L."/>
            <person name="Schwartz J.R."/>
            <person name="Shinn P."/>
            <person name="Southwick A.M."/>
            <person name="Sun H."/>
            <person name="Tallon L.J."/>
            <person name="Tambunga G."/>
            <person name="Toriumi M.J."/>
            <person name="Town C.D."/>
            <person name="Utterback T."/>
            <person name="Van Aken S."/>
            <person name="Vaysberg M."/>
            <person name="Vysotskaia V.S."/>
            <person name="Walker M."/>
            <person name="Wu D."/>
            <person name="Yu G."/>
            <person name="Fraser C.M."/>
            <person name="Venter J.C."/>
            <person name="Davis R.W."/>
        </authorList>
    </citation>
    <scope>NUCLEOTIDE SEQUENCE [LARGE SCALE GENOMIC DNA]</scope>
    <source>
        <strain>cv. Columbia</strain>
    </source>
</reference>
<reference key="2">
    <citation type="journal article" date="2017" name="Plant J.">
        <title>Araport11: a complete reannotation of the Arabidopsis thaliana reference genome.</title>
        <authorList>
            <person name="Cheng C.Y."/>
            <person name="Krishnakumar V."/>
            <person name="Chan A.P."/>
            <person name="Thibaud-Nissen F."/>
            <person name="Schobel S."/>
            <person name="Town C.D."/>
        </authorList>
    </citation>
    <scope>GENOME REANNOTATION</scope>
    <source>
        <strain>cv. Columbia</strain>
    </source>
</reference>
<reference key="3">
    <citation type="journal article" date="2005" name="Mol. Plant Pathol.">
        <title>Receptor-like proteins involved in plant disease resistance.</title>
        <authorList>
            <person name="Kruijt M."/>
            <person name="de Kock M.J."/>
            <person name="de Wit P.J."/>
        </authorList>
    </citation>
    <scope>REVIEW</scope>
</reference>
<reference key="4">
    <citation type="journal article" date="2005" name="Plant Physiol.">
        <title>Phylogenomic analysis of the receptor-like proteins of rice and Arabidopsis.</title>
        <authorList>
            <person name="Fritz-Laylin L.K."/>
            <person name="Krishnamurthy N."/>
            <person name="Toer M."/>
            <person name="Sjoelander K.V."/>
            <person name="Jones J.D."/>
        </authorList>
    </citation>
    <scope>GENE FAMILY</scope>
</reference>
<reference key="5">
    <citation type="journal article" date="2008" name="Plant Physiol.">
        <title>A genome-wide functional investigation into the roles of receptor-like proteins in Arabidopsis.</title>
        <authorList>
            <person name="Wang G."/>
            <person name="Ellendorff U."/>
            <person name="Kemp B."/>
            <person name="Mansfield J.W."/>
            <person name="Forsyth A."/>
            <person name="Mitchell K."/>
            <person name="Bastas K."/>
            <person name="Liu C.-M."/>
            <person name="Woods-Toer A."/>
            <person name="Zipfel C."/>
            <person name="de Wit P.J.G.M."/>
            <person name="Jones J.D.G."/>
            <person name="Toer M."/>
            <person name="Thomma B.P.H.J."/>
        </authorList>
    </citation>
    <scope>GENE FAMILY</scope>
    <scope>NOMENCLATURE</scope>
</reference>
<gene>
    <name evidence="4" type="primary">RLP8</name>
    <name evidence="5" type="ordered locus">At1g54470/At1g54475</name>
    <name evidence="6" type="ORF">F20D21.29</name>
</gene>
<accession>Q9SLI6</accession>
<accession>A0A1P8ANW0</accession>
<accession>Q3ECQ0</accession>
<protein>
    <recommendedName>
        <fullName evidence="4">Putative receptor-like protein 8</fullName>
        <shortName evidence="4">AtRLP8</shortName>
    </recommendedName>
</protein>
<feature type="signal peptide" evidence="1">
    <location>
        <begin position="1"/>
        <end position="22"/>
    </location>
</feature>
<feature type="chain" id="PRO_5004332646" description="Putative receptor-like protein 8">
    <location>
        <begin position="23"/>
        <end position="1009"/>
    </location>
</feature>
<feature type="topological domain" description="Extracellular" evidence="1">
    <location>
        <begin position="23"/>
        <end position="961"/>
    </location>
</feature>
<feature type="transmembrane region" description="Helical" evidence="1">
    <location>
        <begin position="962"/>
        <end position="982"/>
    </location>
</feature>
<feature type="topological domain" description="Cytoplasmic" evidence="1">
    <location>
        <begin position="983"/>
        <end position="1009"/>
    </location>
</feature>
<feature type="repeat" description="LRR 1; degenerate" evidence="4">
    <location>
        <begin position="204"/>
        <end position="231"/>
    </location>
</feature>
<feature type="repeat" description="LRR 2" evidence="1">
    <location>
        <begin position="232"/>
        <end position="255"/>
    </location>
</feature>
<feature type="repeat" description="LRR 3" evidence="1">
    <location>
        <begin position="257"/>
        <end position="281"/>
    </location>
</feature>
<feature type="repeat" description="LRR 4" evidence="1">
    <location>
        <begin position="282"/>
        <end position="305"/>
    </location>
</feature>
<feature type="repeat" description="LRR 5" evidence="1">
    <location>
        <begin position="306"/>
        <end position="329"/>
    </location>
</feature>
<feature type="repeat" description="LRR 6" evidence="1">
    <location>
        <begin position="331"/>
        <end position="354"/>
    </location>
</feature>
<feature type="repeat" description="LRR 7" evidence="1">
    <location>
        <begin position="355"/>
        <end position="377"/>
    </location>
</feature>
<feature type="repeat" description="LRR 8" evidence="1">
    <location>
        <begin position="379"/>
        <end position="402"/>
    </location>
</feature>
<feature type="repeat" description="LRR 9" evidence="1">
    <location>
        <begin position="404"/>
        <end position="427"/>
    </location>
</feature>
<feature type="repeat" description="LRR 10" evidence="1">
    <location>
        <begin position="442"/>
        <end position="465"/>
    </location>
</feature>
<feature type="repeat" description="LRR 11" evidence="1">
    <location>
        <begin position="466"/>
        <end position="490"/>
    </location>
</feature>
<feature type="repeat" description="LRR 12" evidence="1">
    <location>
        <begin position="492"/>
        <end position="514"/>
    </location>
</feature>
<feature type="repeat" description="LRR 13" evidence="1">
    <location>
        <begin position="515"/>
        <end position="538"/>
    </location>
</feature>
<feature type="repeat" description="LRR 14" evidence="1">
    <location>
        <begin position="540"/>
        <end position="565"/>
    </location>
</feature>
<feature type="repeat" description="LRR 15" evidence="1">
    <location>
        <begin position="567"/>
        <end position="587"/>
    </location>
</feature>
<feature type="repeat" description="LRR 16" evidence="1">
    <location>
        <begin position="588"/>
        <end position="612"/>
    </location>
</feature>
<feature type="repeat" description="LRR 17" evidence="1">
    <location>
        <begin position="613"/>
        <end position="636"/>
    </location>
</feature>
<feature type="repeat" description="LRR 18" evidence="1">
    <location>
        <begin position="638"/>
        <end position="660"/>
    </location>
</feature>
<feature type="repeat" description="LRR 19" evidence="1">
    <location>
        <begin position="662"/>
        <end position="681"/>
    </location>
</feature>
<feature type="repeat" description="LRR 20" evidence="1">
    <location>
        <begin position="682"/>
        <end position="705"/>
    </location>
</feature>
<feature type="repeat" description="LRR 21" evidence="1">
    <location>
        <begin position="707"/>
        <end position="728"/>
    </location>
</feature>
<feature type="repeat" description="LRR 22" evidence="1">
    <location>
        <begin position="729"/>
        <end position="752"/>
    </location>
</feature>
<feature type="repeat" description="LRR 23" evidence="1">
    <location>
        <begin position="819"/>
        <end position="842"/>
    </location>
</feature>
<feature type="repeat" description="LRR 24" evidence="1">
    <location>
        <begin position="843"/>
        <end position="866"/>
    </location>
</feature>
<feature type="repeat" description="LRR 25" evidence="1">
    <location>
        <begin position="867"/>
        <end position="891"/>
    </location>
</feature>
<feature type="repeat" description="LRR 26" evidence="1">
    <location>
        <begin position="893"/>
        <end position="916"/>
    </location>
</feature>
<feature type="region of interest" description="Disordered" evidence="3">
    <location>
        <begin position="934"/>
        <end position="955"/>
    </location>
</feature>
<feature type="compositionally biased region" description="Acidic residues" evidence="3">
    <location>
        <begin position="945"/>
        <end position="955"/>
    </location>
</feature>
<feature type="glycosylation site" description="N-linked (GlcNAc...) asparagine" evidence="2">
    <location>
        <position position="159"/>
    </location>
</feature>
<feature type="glycosylation site" description="N-linked (GlcNAc...) asparagine" evidence="2">
    <location>
        <position position="197"/>
    </location>
</feature>
<feature type="glycosylation site" description="N-linked (GlcNAc...) asparagine" evidence="2">
    <location>
        <position position="267"/>
    </location>
</feature>
<feature type="glycosylation site" description="N-linked (GlcNAc...) asparagine" evidence="2">
    <location>
        <position position="390"/>
    </location>
</feature>
<feature type="glycosylation site" description="N-linked (GlcNAc...) asparagine" evidence="2">
    <location>
        <position position="402"/>
    </location>
</feature>
<feature type="glycosylation site" description="N-linked (GlcNAc...) asparagine" evidence="2">
    <location>
        <position position="497"/>
    </location>
</feature>
<feature type="glycosylation site" description="N-linked (GlcNAc...) asparagine" evidence="2">
    <location>
        <position position="516"/>
    </location>
</feature>
<feature type="glycosylation site" description="N-linked (GlcNAc...) asparagine" evidence="2">
    <location>
        <position position="526"/>
    </location>
</feature>
<feature type="glycosylation site" description="N-linked (GlcNAc...) asparagine" evidence="2">
    <location>
        <position position="551"/>
    </location>
</feature>
<feature type="glycosylation site" description="N-linked (GlcNAc...) asparagine" evidence="2">
    <location>
        <position position="588"/>
    </location>
</feature>
<feature type="glycosylation site" description="N-linked (GlcNAc...) asparagine" evidence="2">
    <location>
        <position position="611"/>
    </location>
</feature>
<feature type="glycosylation site" description="N-linked (GlcNAc...) asparagine" evidence="2">
    <location>
        <position position="716"/>
    </location>
</feature>
<feature type="glycosylation site" description="N-linked (GlcNAc...) asparagine" evidence="2">
    <location>
        <position position="751"/>
    </location>
</feature>
<feature type="glycosylation site" description="N-linked (GlcNAc...) asparagine" evidence="2">
    <location>
        <position position="850"/>
    </location>
</feature>
<feature type="glycosylation site" description="N-linked (GlcNAc...) asparagine" evidence="2">
    <location>
        <position position="890"/>
    </location>
</feature>
<feature type="glycosylation site" description="N-linked (GlcNAc...) asparagine" evidence="2">
    <location>
        <position position="903"/>
    </location>
</feature>
<feature type="glycosylation site" description="N-linked (GlcNAc...) asparagine" evidence="2">
    <location>
        <position position="934"/>
    </location>
</feature>
<name>RLP8X_ARATH</name>
<keyword id="KW-1003">Cell membrane</keyword>
<keyword id="KW-0325">Glycoprotein</keyword>
<keyword id="KW-0433">Leucine-rich repeat</keyword>
<keyword id="KW-0472">Membrane</keyword>
<keyword id="KW-0675">Receptor</keyword>
<keyword id="KW-1185">Reference proteome</keyword>
<keyword id="KW-0677">Repeat</keyword>
<keyword id="KW-0732">Signal</keyword>
<keyword id="KW-0812">Transmembrane</keyword>
<keyword id="KW-1133">Transmembrane helix</keyword>
<comment type="subcellular location">
    <subcellularLocation>
        <location evidence="4">Cell membrane</location>
        <topology evidence="4">Single-pass type I membrane protein</topology>
    </subcellularLocation>
</comment>
<comment type="similarity">
    <text evidence="4">Belongs to the RLP family.</text>
</comment>
<comment type="caution">
    <text evidence="4">Could be the product of a pseudogene. In strain cv. Columbia, a naturally occurring variation results in the deletion of 35 amino acids in the middle part of the protein. Lacks part of the extracellular leucine-rich repeats that are required for the specificity of the elicitor protein recognition.</text>
</comment>
<comment type="sequence caution" evidence="4">
    <conflict type="erroneous gene model prediction">
        <sequence resource="EMBL-CDS" id="AAD25626"/>
    </conflict>
</comment>
<comment type="sequence caution" evidence="4">
    <conflict type="erroneous gene model prediction">
        <sequence resource="EMBL-CDS" id="AEE33107"/>
    </conflict>
    <text>Was originally thought to correspond to two different genes At1g54470 and At1g54475.</text>
</comment>
<comment type="sequence caution" evidence="4">
    <conflict type="erroneous gene model prediction">
        <sequence resource="EMBL-CDS" id="ANM58320"/>
    </conflict>
    <text>Was originally thought to correspond to two different genes At1g54470 and At1g54475.</text>
</comment>
<sequence>MKTNFVILLLLLCVFAISPSQQEEINQHNPGIYHQKLLYKVQQWRTSLKESNSVELKLSLAAIVAGVLYFLAALISSACGIGSGGLFIPITTLVSRLDLKTGKRFLGQYLIWVILLLGQLHECKSCIEKERVALLDFKKYWMSITQESDLDYVFPTWNNDTKSDCCQWESIMCNPTSGRLIRLHVGASNLKENSLLNISLLHPFEEVRSLELSAGLNGFVDNVEGYKSLRKLKNLEILDLSYNNRFNNNILPFINAATSLTSLSLQNNSMEGPFPFEEIKDLTNLKLLDLSRNILKGPMQGLTHLKKLKALDLSNNVFSSIMELQVVCEMKNLWELDLRENKFVGQLPLCLGRLNKLRVLDLSSNQLNGNLPSTFNRLESLEYLSLLDNNFTGFFSFDPLANLTKLKVFKLSSTSDMLQIKTESEPKYQFQLSVVVIRVCSLEKIPSFLLQDNLFTIFQMPATIVHELQFLDFSVNDISGLLPDNIGYALPNLLRMNGSRNGFQGHLPSSMGEMVNITSLDLSYNNFSGKLPRRFVTGCFSLKHLKLSHNNFSGHFLPRETSFTSLEELRVDSNSFTGKIGVGLLSSNTTLSVLDMSNNFLTGDIPSWMSNLSGLTILSISNNFLEGTIPPSLLAIGFLSLIDLSGNLLSGSLPSRVGGEFGIKLFLHDNMLTGPIPDTLLEKVQILDLRYNQLSGSIPQFVNTESIYILLMKGNNLTGSMSRQLCDLRNIRLLDLSDNKLNGFIPSCLYNLSFGPEDTNSYVGTAITKITPFKFYESTFVVEDFVVISSSFQEIEIKFSMKRRYDSYFGATEFNNDVLDYMYGMDLSSNELSGVIPAELGSLSKLRVMNLSCNFLSSSIPSSFSNLKDIESLDLSHNMLQGSIPQQLTNLSSLVVFDVSYNNLSGIIPQGRQFNTFDEKSYLGNPLLCGPPTNRSCDAKKTSDESENGGEEEDDEAPVDMLAFYFSSASTYVTTLIGIFILMCFDCPLRRAWLRIVDASIASVKSMLP</sequence>
<proteinExistence type="uncertain"/>